<keyword id="KW-0002">3D-structure</keyword>
<keyword id="KW-0007">Acetylation</keyword>
<keyword id="KW-0903">Direct protein sequencing</keyword>
<keyword id="KW-0249">Electron transport</keyword>
<keyword id="KW-0472">Membrane</keyword>
<keyword id="KW-0496">Mitochondrion</keyword>
<keyword id="KW-0999">Mitochondrion inner membrane</keyword>
<keyword id="KW-0597">Phosphoprotein</keyword>
<keyword id="KW-1185">Reference proteome</keyword>
<keyword id="KW-0679">Respiratory chain</keyword>
<keyword id="KW-0812">Transmembrane</keyword>
<keyword id="KW-1133">Transmembrane helix</keyword>
<keyword id="KW-0813">Transport</keyword>
<proteinExistence type="evidence at protein level"/>
<sequence length="82" mass="9768">MGREFGNLARIRHVISYSLSPFEQRAFPSYFSKGIPNVLRRTRERILRVAPPFVVVYLIYTWGNQEFEQSKRKNPAMYENDK</sequence>
<protein>
    <recommendedName>
        <fullName>Cytochrome b-c1 complex subunit 8</fullName>
    </recommendedName>
    <alternativeName>
        <fullName>Complex III subunit 8</fullName>
    </alternativeName>
    <alternativeName>
        <fullName>Complex III subunit VIII</fullName>
    </alternativeName>
    <alternativeName>
        <fullName>Ubiquinol-cytochrome c reductase complex 9.5 kDa protein</fullName>
    </alternativeName>
    <alternativeName>
        <fullName>Ubiquinol-cytochrome c reductase complex ubiquinone-binding protein QP-C</fullName>
    </alternativeName>
</protein>
<evidence type="ECO:0000250" key="1">
    <source>
        <dbReference type="UniProtKB" id="O14949"/>
    </source>
</evidence>
<evidence type="ECO:0000269" key="2">
    <source>
    </source>
</evidence>
<evidence type="ECO:0000269" key="3">
    <source>
    </source>
</evidence>
<evidence type="ECO:0000269" key="4">
    <source>
    </source>
</evidence>
<evidence type="ECO:0000269" key="5">
    <source>
    </source>
</evidence>
<evidence type="ECO:0000305" key="6"/>
<evidence type="ECO:0000312" key="7">
    <source>
        <dbReference type="PDB" id="7O3E"/>
    </source>
</evidence>
<evidence type="ECO:0007744" key="8">
    <source>
        <dbReference type="PDB" id="7O37"/>
    </source>
</evidence>
<evidence type="ECO:0007744" key="9">
    <source>
        <dbReference type="PDB" id="7O3C"/>
    </source>
</evidence>
<evidence type="ECO:0007744" key="10">
    <source>
        <dbReference type="PDB" id="8PW5"/>
    </source>
</evidence>
<evidence type="ECO:0007744" key="11">
    <source>
    </source>
</evidence>
<evidence type="ECO:0007744" key="12">
    <source>
    </source>
</evidence>
<evidence type="ECO:0007829" key="13">
    <source>
        <dbReference type="PDB" id="7O3H"/>
    </source>
</evidence>
<comment type="function">
    <text evidence="4 5">Component of the ubiquinol-cytochrome c oxidoreductase, a multisubunit transmembrane complex that is part of the mitochondrial electron transport chain which drives oxidative phosphorylation. The respiratory chain contains 3 multisubunit complexes succinate dehydrogenase (complex II, CII), ubiquinol-cytochrome c oxidoreductase (cytochrome b-c1 complex, complex III, CIII) and cytochrome c oxidase (complex IV, CIV), that cooperate to transfer electrons derived from NADH and succinate to molecular oxygen, creating an electrochemical gradient over the inner membrane that drives transmembrane transport and the ATP synthase. The cytochrome b-c1 complex catalyzes electron transfer from ubiquinol to cytochrome c, linking this redox reaction to translocation of protons across the mitochondrial inner membrane, with protons being carried across the membrane as hydrogens on the quinol. In the process called Q cycle, 2 protons are consumed from the matrix, 4 protons are released into the intermembrane space and 2 electrons are passed to cytochrome c.</text>
</comment>
<comment type="subunit">
    <text evidence="2 3 4 5">Component of the ubiquinol-cytochrome c oxidoreductase (cytochrome b-c1 complex, complex III, CIII), a multisubunit enzyme composed of 11 subunits (PubMed:34616041, PubMed:38575788). The complex is composed of 3 respiratory subunits cytochrome b, cytochrome c1 and Rieske protein UQCRFS1, 2 core protein subunits UQCRC1/QCR1 and UQCRC2/QCR2, and 6 low-molecular weight protein subunits UQCRH/QCR6, UQCRB/QCR7, UQCRQ/QCR8, UQCR10/QCR9, UQCR11/QCR10 and subunit 9, the cleavage product of Rieske protein UQCRFS1 (PubMed:34616041, PubMed:38575788). The complex exists as an obligatory dimer and forms supercomplexes (SCs) in the inner mitochondrial membrane with NADH-ubiquinone oxidoreductase (complex I, CI) and cytochrome c oxidase (complex IV, CIV), resulting in different assemblies (supercomplex SCI(1)III(2)IV(1) and megacomplex MCI(2)III(2)IV(2)) (PubMed:19026783, PubMed:34616041, PubMed:38575788). Interacts with UQCC6 (PubMed:32161263).</text>
</comment>
<comment type="subcellular location">
    <subcellularLocation>
        <location evidence="4 5">Mitochondrion inner membrane</location>
        <topology evidence="4 5">Single-pass membrane protein</topology>
    </subcellularLocation>
</comment>
<comment type="similarity">
    <text evidence="6">Belongs to the UQCRQ/QCR8 family.</text>
</comment>
<accession>Q9CQ69</accession>
<dbReference type="EMBL" id="AK007982">
    <property type="protein sequence ID" value="BAB25388.1"/>
    <property type="molecule type" value="mRNA"/>
</dbReference>
<dbReference type="EMBL" id="AK002389">
    <property type="protein sequence ID" value="BAB22063.1"/>
    <property type="molecule type" value="mRNA"/>
</dbReference>
<dbReference type="EMBL" id="AK003160">
    <property type="protein sequence ID" value="BAB22613.1"/>
    <property type="molecule type" value="mRNA"/>
</dbReference>
<dbReference type="EMBL" id="AK005374">
    <property type="protein sequence ID" value="BAB23983.1"/>
    <property type="molecule type" value="mRNA"/>
</dbReference>
<dbReference type="EMBL" id="BC028519">
    <property type="protein sequence ID" value="AAH28519.1"/>
    <property type="molecule type" value="mRNA"/>
</dbReference>
<dbReference type="CCDS" id="CCDS36151.1"/>
<dbReference type="RefSeq" id="NP_001313543.1">
    <property type="nucleotide sequence ID" value="NM_001326614.1"/>
</dbReference>
<dbReference type="RefSeq" id="NP_079628.1">
    <property type="nucleotide sequence ID" value="NM_025352.3"/>
</dbReference>
<dbReference type="PDB" id="7O37">
    <property type="method" value="EM"/>
    <property type="resolution" value="3.20 A"/>
    <property type="chains" value="G/R=2-82"/>
</dbReference>
<dbReference type="PDB" id="7O3C">
    <property type="method" value="EM"/>
    <property type="resolution" value="3.30 A"/>
    <property type="chains" value="G/R=2-82"/>
</dbReference>
<dbReference type="PDB" id="7O3E">
    <property type="method" value="EM"/>
    <property type="resolution" value="3.60 A"/>
    <property type="chains" value="G/R=2-82"/>
</dbReference>
<dbReference type="PDB" id="7O3H">
    <property type="method" value="EM"/>
    <property type="resolution" value="2.60 A"/>
    <property type="chains" value="G/R=2-82"/>
</dbReference>
<dbReference type="PDB" id="8IAO">
    <property type="method" value="EM"/>
    <property type="resolution" value="4.20 A"/>
    <property type="chains" value="AG/Ag=1-82"/>
</dbReference>
<dbReference type="PDB" id="8IAR">
    <property type="method" value="EM"/>
    <property type="resolution" value="3.40 A"/>
    <property type="chains" value="AG/Ag=1-82"/>
</dbReference>
<dbReference type="PDB" id="8IB4">
    <property type="method" value="EM"/>
    <property type="resolution" value="4.30 A"/>
    <property type="chains" value="AG/Ag=1-82"/>
</dbReference>
<dbReference type="PDB" id="8IB7">
    <property type="method" value="EM"/>
    <property type="resolution" value="3.40 A"/>
    <property type="chains" value="AG/Ag=1-82"/>
</dbReference>
<dbReference type="PDB" id="8IB9">
    <property type="method" value="EM"/>
    <property type="resolution" value="4.30 A"/>
    <property type="chains" value="AG/Ag=1-82"/>
</dbReference>
<dbReference type="PDB" id="8IBC">
    <property type="method" value="EM"/>
    <property type="resolution" value="3.60 A"/>
    <property type="chains" value="AG/Ag=1-82"/>
</dbReference>
<dbReference type="PDB" id="8IBD">
    <property type="method" value="EM"/>
    <property type="resolution" value="4.20 A"/>
    <property type="chains" value="AG/Ag=1-82"/>
</dbReference>
<dbReference type="PDB" id="8IBG">
    <property type="method" value="EM"/>
    <property type="resolution" value="3.80 A"/>
    <property type="chains" value="AG/Ag=1-82"/>
</dbReference>
<dbReference type="PDB" id="8IC2">
    <property type="method" value="EM"/>
    <property type="resolution" value="6.30 A"/>
    <property type="chains" value="AG/Ag=1-82"/>
</dbReference>
<dbReference type="PDB" id="8IC5">
    <property type="method" value="EM"/>
    <property type="resolution" value="4.10 A"/>
    <property type="chains" value="AG/Ag=1-82"/>
</dbReference>
<dbReference type="PDB" id="8PW5">
    <property type="method" value="EM"/>
    <property type="resolution" value="3.60 A"/>
    <property type="chains" value="G/R=1-82"/>
</dbReference>
<dbReference type="PDB" id="8PW6">
    <property type="method" value="EM"/>
    <property type="resolution" value="3.30 A"/>
    <property type="chains" value="G/R=1-82"/>
</dbReference>
<dbReference type="PDB" id="8PW7">
    <property type="method" value="EM"/>
    <property type="resolution" value="3.50 A"/>
    <property type="chains" value="G/R=1-82"/>
</dbReference>
<dbReference type="PDB" id="8UCA">
    <property type="method" value="EM"/>
    <property type="resolution" value="3.70 A"/>
    <property type="chains" value="3G/3R=2-82"/>
</dbReference>
<dbReference type="PDBsum" id="7O37"/>
<dbReference type="PDBsum" id="7O3C"/>
<dbReference type="PDBsum" id="7O3E"/>
<dbReference type="PDBsum" id="7O3H"/>
<dbReference type="PDBsum" id="8IAO"/>
<dbReference type="PDBsum" id="8IAR"/>
<dbReference type="PDBsum" id="8IB4"/>
<dbReference type="PDBsum" id="8IB7"/>
<dbReference type="PDBsum" id="8IB9"/>
<dbReference type="PDBsum" id="8IBC"/>
<dbReference type="PDBsum" id="8IBD"/>
<dbReference type="PDBsum" id="8IBG"/>
<dbReference type="PDBsum" id="8IC2"/>
<dbReference type="PDBsum" id="8IC5"/>
<dbReference type="PDBsum" id="8PW5"/>
<dbReference type="PDBsum" id="8PW6"/>
<dbReference type="PDBsum" id="8PW7"/>
<dbReference type="PDBsum" id="8UCA"/>
<dbReference type="EMDB" id="EMD-12702"/>
<dbReference type="EMDB" id="EMD-12703"/>
<dbReference type="EMDB" id="EMD-12705"/>
<dbReference type="EMDB" id="EMD-12706"/>
<dbReference type="EMDB" id="EMD-17989"/>
<dbReference type="EMDB" id="EMD-17990"/>
<dbReference type="EMDB" id="EMD-17991"/>
<dbReference type="EMDB" id="EMD-35313"/>
<dbReference type="EMDB" id="EMD-35316"/>
<dbReference type="EMDB" id="EMD-35331"/>
<dbReference type="EMDB" id="EMD-35334"/>
<dbReference type="EMDB" id="EMD-35336"/>
<dbReference type="EMDB" id="EMD-35339"/>
<dbReference type="EMDB" id="EMD-35340"/>
<dbReference type="EMDB" id="EMD-35343"/>
<dbReference type="EMDB" id="EMD-35352"/>
<dbReference type="EMDB" id="EMD-35355"/>
<dbReference type="EMDB" id="EMD-42122"/>
<dbReference type="SMR" id="Q9CQ69"/>
<dbReference type="BioGRID" id="204458">
    <property type="interactions" value="14"/>
</dbReference>
<dbReference type="ComplexPortal" id="CPX-563">
    <property type="entry name" value="Mitochondrial respiratory chain complex III"/>
</dbReference>
<dbReference type="CORUM" id="Q9CQ69"/>
<dbReference type="FunCoup" id="Q9CQ69">
    <property type="interactions" value="1394"/>
</dbReference>
<dbReference type="IntAct" id="Q9CQ69">
    <property type="interactions" value="5"/>
</dbReference>
<dbReference type="STRING" id="10090.ENSMUSP00000053145"/>
<dbReference type="GlyGen" id="Q9CQ69">
    <property type="glycosylation" value="1 site, 1 O-linked glycan (1 site)"/>
</dbReference>
<dbReference type="iPTMnet" id="Q9CQ69"/>
<dbReference type="PhosphoSitePlus" id="Q9CQ69"/>
<dbReference type="SwissPalm" id="Q9CQ69"/>
<dbReference type="jPOST" id="Q9CQ69"/>
<dbReference type="PaxDb" id="10090-ENSMUSP00000053145"/>
<dbReference type="PeptideAtlas" id="Q9CQ69"/>
<dbReference type="ProteomicsDB" id="301903"/>
<dbReference type="Pumba" id="Q9CQ69"/>
<dbReference type="TopDownProteomics" id="Q9CQ69"/>
<dbReference type="Antibodypedia" id="45197">
    <property type="antibodies" value="130 antibodies from 27 providers"/>
</dbReference>
<dbReference type="DNASU" id="22272"/>
<dbReference type="Ensembl" id="ENSMUST00000061326.5">
    <property type="protein sequence ID" value="ENSMUSP00000053145.5"/>
    <property type="gene ID" value="ENSMUSG00000044894.15"/>
</dbReference>
<dbReference type="Ensembl" id="ENSMUST00000109021.4">
    <property type="protein sequence ID" value="ENSMUSP00000104649.4"/>
    <property type="gene ID" value="ENSMUSG00000044894.15"/>
</dbReference>
<dbReference type="GeneID" id="22272"/>
<dbReference type="KEGG" id="mmu:22272"/>
<dbReference type="UCSC" id="uc007ivy.2">
    <property type="organism name" value="mouse"/>
</dbReference>
<dbReference type="AGR" id="MGI:107807"/>
<dbReference type="CTD" id="27089"/>
<dbReference type="MGI" id="MGI:107807">
    <property type="gene designation" value="Uqcrq"/>
</dbReference>
<dbReference type="VEuPathDB" id="HostDB:ENSMUSG00000044894"/>
<dbReference type="eggNOG" id="KOG4116">
    <property type="taxonomic scope" value="Eukaryota"/>
</dbReference>
<dbReference type="GeneTree" id="ENSGT00390000004029"/>
<dbReference type="HOGENOM" id="CLU_156007_2_0_1"/>
<dbReference type="InParanoid" id="Q9CQ69"/>
<dbReference type="OMA" id="MWRRFKG"/>
<dbReference type="OrthoDB" id="6683853at2759"/>
<dbReference type="PhylomeDB" id="Q9CQ69"/>
<dbReference type="TreeFam" id="TF300281"/>
<dbReference type="Reactome" id="R-MMU-611105">
    <property type="pathway name" value="Respiratory electron transport"/>
</dbReference>
<dbReference type="Reactome" id="R-MMU-9837999">
    <property type="pathway name" value="Mitochondrial protein degradation"/>
</dbReference>
<dbReference type="Reactome" id="R-MMU-9865881">
    <property type="pathway name" value="Complex III assembly"/>
</dbReference>
<dbReference type="BioGRID-ORCS" id="22272">
    <property type="hits" value="25 hits in 78 CRISPR screens"/>
</dbReference>
<dbReference type="ChiTaRS" id="Uqcrq">
    <property type="organism name" value="mouse"/>
</dbReference>
<dbReference type="PRO" id="PR:Q9CQ69"/>
<dbReference type="Proteomes" id="UP000000589">
    <property type="component" value="Chromosome 11"/>
</dbReference>
<dbReference type="RNAct" id="Q9CQ69">
    <property type="molecule type" value="protein"/>
</dbReference>
<dbReference type="Bgee" id="ENSMUSG00000044894">
    <property type="expression patterns" value="Expressed in interventricular septum and 279 other cell types or tissues"/>
</dbReference>
<dbReference type="ExpressionAtlas" id="Q9CQ69">
    <property type="expression patterns" value="baseline and differential"/>
</dbReference>
<dbReference type="GO" id="GO:0005743">
    <property type="term" value="C:mitochondrial inner membrane"/>
    <property type="evidence" value="ECO:0000314"/>
    <property type="project" value="UniProtKB"/>
</dbReference>
<dbReference type="GO" id="GO:0005739">
    <property type="term" value="C:mitochondrion"/>
    <property type="evidence" value="ECO:0000314"/>
    <property type="project" value="MGI"/>
</dbReference>
<dbReference type="GO" id="GO:0045275">
    <property type="term" value="C:respiratory chain complex III"/>
    <property type="evidence" value="ECO:0000314"/>
    <property type="project" value="UniProtKB"/>
</dbReference>
<dbReference type="GO" id="GO:0045333">
    <property type="term" value="P:cellular respiration"/>
    <property type="evidence" value="ECO:0000303"/>
    <property type="project" value="ComplexPortal"/>
</dbReference>
<dbReference type="GO" id="GO:0021680">
    <property type="term" value="P:cerebellar Purkinje cell layer development"/>
    <property type="evidence" value="ECO:0000270"/>
    <property type="project" value="UniProtKB"/>
</dbReference>
<dbReference type="GO" id="GO:0021766">
    <property type="term" value="P:hippocampus development"/>
    <property type="evidence" value="ECO:0000270"/>
    <property type="project" value="UniProtKB"/>
</dbReference>
<dbReference type="GO" id="GO:0021854">
    <property type="term" value="P:hypothalamus development"/>
    <property type="evidence" value="ECO:0000270"/>
    <property type="project" value="UniProtKB"/>
</dbReference>
<dbReference type="GO" id="GO:0030901">
    <property type="term" value="P:midbrain development"/>
    <property type="evidence" value="ECO:0000270"/>
    <property type="project" value="UniProtKB"/>
</dbReference>
<dbReference type="GO" id="GO:0006122">
    <property type="term" value="P:mitochondrial electron transport, ubiquinol to cytochrome c"/>
    <property type="evidence" value="ECO:0000303"/>
    <property type="project" value="ComplexPortal"/>
</dbReference>
<dbReference type="GO" id="GO:0021548">
    <property type="term" value="P:pons development"/>
    <property type="evidence" value="ECO:0000270"/>
    <property type="project" value="UniProtKB"/>
</dbReference>
<dbReference type="GO" id="GO:0021860">
    <property type="term" value="P:pyramidal neuron development"/>
    <property type="evidence" value="ECO:0000270"/>
    <property type="project" value="UniProtKB"/>
</dbReference>
<dbReference type="GO" id="GO:0021539">
    <property type="term" value="P:subthalamus development"/>
    <property type="evidence" value="ECO:0000270"/>
    <property type="project" value="UniProtKB"/>
</dbReference>
<dbReference type="GO" id="GO:0021794">
    <property type="term" value="P:thalamus development"/>
    <property type="evidence" value="ECO:0000270"/>
    <property type="project" value="UniProtKB"/>
</dbReference>
<dbReference type="FunFam" id="1.20.5.210:FF:000001">
    <property type="entry name" value="Cytochrome b-c1 complex subunit 8"/>
    <property type="match status" value="1"/>
</dbReference>
<dbReference type="Gene3D" id="1.20.5.210">
    <property type="entry name" value="Cytochrome b-c1 complex subunit 8"/>
    <property type="match status" value="1"/>
</dbReference>
<dbReference type="InterPro" id="IPR004205">
    <property type="entry name" value="Cyt_bc1_su8"/>
</dbReference>
<dbReference type="InterPro" id="IPR036642">
    <property type="entry name" value="Cyt_bc1_su8_sf"/>
</dbReference>
<dbReference type="PANTHER" id="PTHR12119:SF2">
    <property type="entry name" value="CYTOCHROME B-C1 COMPLEX SUBUNIT 8"/>
    <property type="match status" value="1"/>
</dbReference>
<dbReference type="PANTHER" id="PTHR12119">
    <property type="entry name" value="UBIQUINOL-CYTOCHROME C REDUCTASE COMPLEX UBIQUINONE-BINDING PROTEIN QP-C"/>
    <property type="match status" value="1"/>
</dbReference>
<dbReference type="Pfam" id="PF02939">
    <property type="entry name" value="UcrQ"/>
    <property type="match status" value="1"/>
</dbReference>
<dbReference type="SUPFAM" id="SSF81508">
    <property type="entry name" value="Ubiquinone-binding protein QP-C of cytochrome bc1 complex (Ubiquinol-cytochrome c reductase)"/>
    <property type="match status" value="1"/>
</dbReference>
<reference key="1">
    <citation type="journal article" date="2005" name="Science">
        <title>The transcriptional landscape of the mammalian genome.</title>
        <authorList>
            <person name="Carninci P."/>
            <person name="Kasukawa T."/>
            <person name="Katayama S."/>
            <person name="Gough J."/>
            <person name="Frith M.C."/>
            <person name="Maeda N."/>
            <person name="Oyama R."/>
            <person name="Ravasi T."/>
            <person name="Lenhard B."/>
            <person name="Wells C."/>
            <person name="Kodzius R."/>
            <person name="Shimokawa K."/>
            <person name="Bajic V.B."/>
            <person name="Brenner S.E."/>
            <person name="Batalov S."/>
            <person name="Forrest A.R."/>
            <person name="Zavolan M."/>
            <person name="Davis M.J."/>
            <person name="Wilming L.G."/>
            <person name="Aidinis V."/>
            <person name="Allen J.E."/>
            <person name="Ambesi-Impiombato A."/>
            <person name="Apweiler R."/>
            <person name="Aturaliya R.N."/>
            <person name="Bailey T.L."/>
            <person name="Bansal M."/>
            <person name="Baxter L."/>
            <person name="Beisel K.W."/>
            <person name="Bersano T."/>
            <person name="Bono H."/>
            <person name="Chalk A.M."/>
            <person name="Chiu K.P."/>
            <person name="Choudhary V."/>
            <person name="Christoffels A."/>
            <person name="Clutterbuck D.R."/>
            <person name="Crowe M.L."/>
            <person name="Dalla E."/>
            <person name="Dalrymple B.P."/>
            <person name="de Bono B."/>
            <person name="Della Gatta G."/>
            <person name="di Bernardo D."/>
            <person name="Down T."/>
            <person name="Engstrom P."/>
            <person name="Fagiolini M."/>
            <person name="Faulkner G."/>
            <person name="Fletcher C.F."/>
            <person name="Fukushima T."/>
            <person name="Furuno M."/>
            <person name="Futaki S."/>
            <person name="Gariboldi M."/>
            <person name="Georgii-Hemming P."/>
            <person name="Gingeras T.R."/>
            <person name="Gojobori T."/>
            <person name="Green R.E."/>
            <person name="Gustincich S."/>
            <person name="Harbers M."/>
            <person name="Hayashi Y."/>
            <person name="Hensch T.K."/>
            <person name="Hirokawa N."/>
            <person name="Hill D."/>
            <person name="Huminiecki L."/>
            <person name="Iacono M."/>
            <person name="Ikeo K."/>
            <person name="Iwama A."/>
            <person name="Ishikawa T."/>
            <person name="Jakt M."/>
            <person name="Kanapin A."/>
            <person name="Katoh M."/>
            <person name="Kawasawa Y."/>
            <person name="Kelso J."/>
            <person name="Kitamura H."/>
            <person name="Kitano H."/>
            <person name="Kollias G."/>
            <person name="Krishnan S.P."/>
            <person name="Kruger A."/>
            <person name="Kummerfeld S.K."/>
            <person name="Kurochkin I.V."/>
            <person name="Lareau L.F."/>
            <person name="Lazarevic D."/>
            <person name="Lipovich L."/>
            <person name="Liu J."/>
            <person name="Liuni S."/>
            <person name="McWilliam S."/>
            <person name="Madan Babu M."/>
            <person name="Madera M."/>
            <person name="Marchionni L."/>
            <person name="Matsuda H."/>
            <person name="Matsuzawa S."/>
            <person name="Miki H."/>
            <person name="Mignone F."/>
            <person name="Miyake S."/>
            <person name="Morris K."/>
            <person name="Mottagui-Tabar S."/>
            <person name="Mulder N."/>
            <person name="Nakano N."/>
            <person name="Nakauchi H."/>
            <person name="Ng P."/>
            <person name="Nilsson R."/>
            <person name="Nishiguchi S."/>
            <person name="Nishikawa S."/>
            <person name="Nori F."/>
            <person name="Ohara O."/>
            <person name="Okazaki Y."/>
            <person name="Orlando V."/>
            <person name="Pang K.C."/>
            <person name="Pavan W.J."/>
            <person name="Pavesi G."/>
            <person name="Pesole G."/>
            <person name="Petrovsky N."/>
            <person name="Piazza S."/>
            <person name="Reed J."/>
            <person name="Reid J.F."/>
            <person name="Ring B.Z."/>
            <person name="Ringwald M."/>
            <person name="Rost B."/>
            <person name="Ruan Y."/>
            <person name="Salzberg S.L."/>
            <person name="Sandelin A."/>
            <person name="Schneider C."/>
            <person name="Schoenbach C."/>
            <person name="Sekiguchi K."/>
            <person name="Semple C.A."/>
            <person name="Seno S."/>
            <person name="Sessa L."/>
            <person name="Sheng Y."/>
            <person name="Shibata Y."/>
            <person name="Shimada H."/>
            <person name="Shimada K."/>
            <person name="Silva D."/>
            <person name="Sinclair B."/>
            <person name="Sperling S."/>
            <person name="Stupka E."/>
            <person name="Sugiura K."/>
            <person name="Sultana R."/>
            <person name="Takenaka Y."/>
            <person name="Taki K."/>
            <person name="Tammoja K."/>
            <person name="Tan S.L."/>
            <person name="Tang S."/>
            <person name="Taylor M.S."/>
            <person name="Tegner J."/>
            <person name="Teichmann S.A."/>
            <person name="Ueda H.R."/>
            <person name="van Nimwegen E."/>
            <person name="Verardo R."/>
            <person name="Wei C.L."/>
            <person name="Yagi K."/>
            <person name="Yamanishi H."/>
            <person name="Zabarovsky E."/>
            <person name="Zhu S."/>
            <person name="Zimmer A."/>
            <person name="Hide W."/>
            <person name="Bult C."/>
            <person name="Grimmond S.M."/>
            <person name="Teasdale R.D."/>
            <person name="Liu E.T."/>
            <person name="Brusic V."/>
            <person name="Quackenbush J."/>
            <person name="Wahlestedt C."/>
            <person name="Mattick J.S."/>
            <person name="Hume D.A."/>
            <person name="Kai C."/>
            <person name="Sasaki D."/>
            <person name="Tomaru Y."/>
            <person name="Fukuda S."/>
            <person name="Kanamori-Katayama M."/>
            <person name="Suzuki M."/>
            <person name="Aoki J."/>
            <person name="Arakawa T."/>
            <person name="Iida J."/>
            <person name="Imamura K."/>
            <person name="Itoh M."/>
            <person name="Kato T."/>
            <person name="Kawaji H."/>
            <person name="Kawagashira N."/>
            <person name="Kawashima T."/>
            <person name="Kojima M."/>
            <person name="Kondo S."/>
            <person name="Konno H."/>
            <person name="Nakano K."/>
            <person name="Ninomiya N."/>
            <person name="Nishio T."/>
            <person name="Okada M."/>
            <person name="Plessy C."/>
            <person name="Shibata K."/>
            <person name="Shiraki T."/>
            <person name="Suzuki S."/>
            <person name="Tagami M."/>
            <person name="Waki K."/>
            <person name="Watahiki A."/>
            <person name="Okamura-Oho Y."/>
            <person name="Suzuki H."/>
            <person name="Kawai J."/>
            <person name="Hayashizaki Y."/>
        </authorList>
    </citation>
    <scope>NUCLEOTIDE SEQUENCE [LARGE SCALE MRNA]</scope>
    <source>
        <strain>C57BL/6J</strain>
        <tissue>Cerebellum</tissue>
        <tissue>Embryo</tissue>
        <tissue>Kidney</tissue>
        <tissue>Pancreas</tissue>
    </source>
</reference>
<reference key="2">
    <citation type="journal article" date="2004" name="Genome Res.">
        <title>The status, quality, and expansion of the NIH full-length cDNA project: the Mammalian Gene Collection (MGC).</title>
        <authorList>
            <consortium name="The MGC Project Team"/>
        </authorList>
    </citation>
    <scope>NUCLEOTIDE SEQUENCE [LARGE SCALE MRNA]</scope>
    <source>
        <strain>C57BL/6J</strain>
        <tissue>Mammary gland</tissue>
    </source>
</reference>
<reference key="3">
    <citation type="submission" date="2007-04" db="UniProtKB">
        <authorList>
            <person name="Lubec G."/>
            <person name="Kang S.U."/>
        </authorList>
    </citation>
    <scope>PROTEIN SEQUENCE OF 4-40 AND 49-71</scope>
    <scope>IDENTIFICATION BY MASS SPECTROMETRY</scope>
    <source>
        <strain>C57BL/6J</strain>
        <tissue>Brain</tissue>
    </source>
</reference>
<reference key="4">
    <citation type="journal article" date="2008" name="Mol. Cell">
        <title>Respiratory active mitochondrial supercomplexes.</title>
        <authorList>
            <person name="Acin-Perez R."/>
            <person name="Fernandez-Silva P."/>
            <person name="Peleato M.L."/>
            <person name="Perez-Martos A."/>
            <person name="Enriquez J.A."/>
        </authorList>
    </citation>
    <scope>SUBUNIT</scope>
</reference>
<reference key="5">
    <citation type="journal article" date="2010" name="Cell">
        <title>A tissue-specific atlas of mouse protein phosphorylation and expression.</title>
        <authorList>
            <person name="Huttlin E.L."/>
            <person name="Jedrychowski M.P."/>
            <person name="Elias J.E."/>
            <person name="Goswami T."/>
            <person name="Rad R."/>
            <person name="Beausoleil S.A."/>
            <person name="Villen J."/>
            <person name="Haas W."/>
            <person name="Sowa M.E."/>
            <person name="Gygi S.P."/>
        </authorList>
    </citation>
    <scope>IDENTIFICATION BY MASS SPECTROMETRY [LARGE SCALE ANALYSIS]</scope>
    <source>
        <tissue>Brain</tissue>
        <tissue>Brown adipose tissue</tissue>
        <tissue>Heart</tissue>
        <tissue>Kidney</tissue>
        <tissue>Liver</tissue>
        <tissue>Lung</tissue>
        <tissue>Pancreas</tissue>
        <tissue>Spleen</tissue>
        <tissue>Testis</tissue>
    </source>
</reference>
<reference key="6">
    <citation type="journal article" date="2013" name="Mol. Cell">
        <title>SIRT5-mediated lysine desuccinylation impacts diverse metabolic pathways.</title>
        <authorList>
            <person name="Park J."/>
            <person name="Chen Y."/>
            <person name="Tishkoff D.X."/>
            <person name="Peng C."/>
            <person name="Tan M."/>
            <person name="Dai L."/>
            <person name="Xie Z."/>
            <person name="Zhang Y."/>
            <person name="Zwaans B.M."/>
            <person name="Skinner M.E."/>
            <person name="Lombard D.B."/>
            <person name="Zhao Y."/>
        </authorList>
    </citation>
    <scope>SUCCINYLATION [LARGE SCALE ANALYSIS] AT LYS-33</scope>
    <scope>IDENTIFICATION BY MASS SPECTROMETRY [LARGE SCALE ANALYSIS]</scope>
    <source>
        <tissue>Liver</tissue>
    </source>
</reference>
<reference key="7">
    <citation type="journal article" date="2013" name="Proc. Natl. Acad. Sci. U.S.A.">
        <title>Label-free quantitative proteomics of the lysine acetylome in mitochondria identifies substrates of SIRT3 in metabolic pathways.</title>
        <authorList>
            <person name="Rardin M.J."/>
            <person name="Newman J.C."/>
            <person name="Held J.M."/>
            <person name="Cusack M.P."/>
            <person name="Sorensen D.J."/>
            <person name="Li B."/>
            <person name="Schilling B."/>
            <person name="Mooney S.D."/>
            <person name="Kahn C.R."/>
            <person name="Verdin E."/>
            <person name="Gibson B.W."/>
        </authorList>
    </citation>
    <scope>ACETYLATION [LARGE SCALE ANALYSIS] AT LYS-33</scope>
    <scope>IDENTIFICATION BY MASS SPECTROMETRY [LARGE SCALE ANALYSIS]</scope>
    <source>
        <tissue>Liver</tissue>
    </source>
</reference>
<reference key="8">
    <citation type="journal article" date="2020" name="Nat. Commun.">
        <title>Mitochondrial peptide BRAWNIN is essential for vertebrate respiratory complex III assembly.</title>
        <authorList>
            <person name="Zhang S."/>
            <person name="Reljic B."/>
            <person name="Liang C."/>
            <person name="Kerouanton B."/>
            <person name="Francisco J.C."/>
            <person name="Peh J.H."/>
            <person name="Mary C."/>
            <person name="Jagannathan N.S."/>
            <person name="Olexiouk V."/>
            <person name="Tang C."/>
            <person name="Fidelito G."/>
            <person name="Nama S."/>
            <person name="Cheng R.K."/>
            <person name="Wee C.L."/>
            <person name="Wang L.C."/>
            <person name="Duek Roggli P."/>
            <person name="Sampath P."/>
            <person name="Lane L."/>
            <person name="Petretto E."/>
            <person name="Sobota R.M."/>
            <person name="Jesuthasan S."/>
            <person name="Tucker-Kellogg L."/>
            <person name="Reversade B."/>
            <person name="Menschaert G."/>
            <person name="Sun L."/>
            <person name="Stroud D.A."/>
            <person name="Ho L."/>
        </authorList>
    </citation>
    <scope>INTERACTION WITH UQCC6</scope>
</reference>
<reference evidence="7 8 9" key="9">
    <citation type="journal article" date="2021" name="Nature">
        <title>Structure and assembly of the mammalian mitochondrial supercomplex CIII2CIV.</title>
        <authorList>
            <person name="Vercellino I."/>
            <person name="Sazanov L.A."/>
        </authorList>
    </citation>
    <scope>STRUCTURE BY ELECTRON MICROSCOPY (3.20 ANGSTROMS) IN COMPLEX WITH MITOCHONDRIAL RESPIRATORY SUPERCOMPLEX</scope>
    <scope>FUNCTION</scope>
    <scope>SUBCELLULAR LOCATION</scope>
    <scope>SUBUNIT</scope>
</reference>
<reference evidence="10" key="10">
    <citation type="journal article" date="2024" name="Nat. Struct. Mol. Biol.">
        <title>SCAF1 drives the compositional diversity of mammalian respirasomes.</title>
        <authorList>
            <person name="Vercellino I."/>
            <person name="Sazanov L.A."/>
        </authorList>
    </citation>
    <scope>STRUCTURE BY ELECTRON MICROSCOPY (3.60 ANGSTROMS) IN COMPLEX WITH MITOCHONDRIAL RESPIRATORY SUPERCOMPLEX</scope>
    <scope>FUNCTION</scope>
    <scope>SUBCELLULAR LOCATION</scope>
    <scope>SUBUNIT</scope>
</reference>
<name>QCR8_MOUSE</name>
<organism>
    <name type="scientific">Mus musculus</name>
    <name type="common">Mouse</name>
    <dbReference type="NCBI Taxonomy" id="10090"/>
    <lineage>
        <taxon>Eukaryota</taxon>
        <taxon>Metazoa</taxon>
        <taxon>Chordata</taxon>
        <taxon>Craniata</taxon>
        <taxon>Vertebrata</taxon>
        <taxon>Euteleostomi</taxon>
        <taxon>Mammalia</taxon>
        <taxon>Eutheria</taxon>
        <taxon>Euarchontoglires</taxon>
        <taxon>Glires</taxon>
        <taxon>Rodentia</taxon>
        <taxon>Myomorpha</taxon>
        <taxon>Muroidea</taxon>
        <taxon>Muridae</taxon>
        <taxon>Murinae</taxon>
        <taxon>Mus</taxon>
        <taxon>Mus</taxon>
    </lineage>
</organism>
<gene>
    <name type="primary">Uqcrq</name>
</gene>
<feature type="chain" id="PRO_0000193545" description="Cytochrome b-c1 complex subunit 8">
    <location>
        <begin position="1"/>
        <end position="82"/>
    </location>
</feature>
<feature type="topological domain" description="Mitochondrial matrix" evidence="4 8 9">
    <location>
        <begin position="1"/>
        <end position="43"/>
    </location>
</feature>
<feature type="transmembrane region" description="Helical" evidence="4 8 9">
    <location>
        <begin position="44"/>
        <end position="62"/>
    </location>
</feature>
<feature type="topological domain" description="Mitochondrial intermembrane" evidence="4 8 9">
    <location>
        <begin position="63"/>
        <end position="82"/>
    </location>
</feature>
<feature type="modified residue" description="Phosphoserine" evidence="1">
    <location>
        <position position="16"/>
    </location>
</feature>
<feature type="modified residue" description="N6-acetyllysine; alternate" evidence="11">
    <location>
        <position position="33"/>
    </location>
</feature>
<feature type="modified residue" description="N6-succinyllysine; alternate" evidence="12">
    <location>
        <position position="33"/>
    </location>
</feature>
<feature type="strand" evidence="13">
    <location>
        <begin position="13"/>
        <end position="19"/>
    </location>
</feature>
<feature type="turn" evidence="13">
    <location>
        <begin position="21"/>
        <end position="23"/>
    </location>
</feature>
<feature type="helix" evidence="13">
    <location>
        <begin position="30"/>
        <end position="70"/>
    </location>
</feature>
<feature type="turn" evidence="13">
    <location>
        <begin position="75"/>
        <end position="78"/>
    </location>
</feature>